<name>PG145_VACCC</name>
<reference key="1">
    <citation type="journal article" date="1990" name="Virology">
        <title>The complete DNA sequence of vaccinia virus.</title>
        <authorList>
            <person name="Goebel S.J."/>
            <person name="Johnson G.P."/>
            <person name="Perkus M.E."/>
            <person name="Davis S.W."/>
            <person name="Winslow J.P."/>
            <person name="Paoletti E."/>
        </authorList>
    </citation>
    <scope>NUCLEOTIDE SEQUENCE [LARGE SCALE GENOMIC DNA]</scope>
</reference>
<reference key="2">
    <citation type="journal article" date="1990" name="Virology">
        <title>Appendix to 'The complete DNA sequence of vaccinia virus'.</title>
        <authorList>
            <person name="Goebel S.J."/>
            <person name="Johnson G.P."/>
            <person name="Perkus M.E."/>
            <person name="Davis S.W."/>
            <person name="Winslow J.P."/>
            <person name="Paoletti E."/>
        </authorList>
    </citation>
    <scope>NUCLEOTIDE SEQUENCE [LARGE SCALE GENOMIC DNA]</scope>
</reference>
<reference key="3">
    <citation type="journal article" date="1992" name="J. Gen. Virol.">
        <title>Vaccinia virus encodes four putative DNA and/or RNA helicases distantly related to each other.</title>
        <authorList>
            <person name="Koonin E.V."/>
            <person name="Senkevich T.G."/>
        </authorList>
    </citation>
    <scope>SIMILARITY TO HELICASES</scope>
</reference>
<organismHost>
    <name type="scientific">Homo sapiens</name>
    <name type="common">Human</name>
    <dbReference type="NCBI Taxonomy" id="9606"/>
</organismHost>
<protein>
    <recommendedName>
        <fullName>Transcript termination protein OPG145</fullName>
        <ecNumber>3.6.4.-</ecNumber>
    </recommendedName>
    <alternativeName>
        <fullName>56 kDa abortive late protein</fullName>
    </alternativeName>
</protein>
<feature type="chain" id="PRO_0000102176" description="Transcript termination protein OPG145">
    <location>
        <begin position="1"/>
        <end position="493"/>
    </location>
</feature>
<feature type="domain" description="Helicase ATP-binding" evidence="2">
    <location>
        <begin position="100"/>
        <end position="256"/>
    </location>
</feature>
<feature type="domain" description="Helicase C-terminal" evidence="3">
    <location>
        <begin position="309"/>
        <end position="456"/>
    </location>
</feature>
<feature type="short sequence motif" description="DESH box">
    <location>
        <begin position="206"/>
        <end position="209"/>
    </location>
</feature>
<feature type="binding site" evidence="2">
    <location>
        <begin position="113"/>
        <end position="120"/>
    </location>
    <ligand>
        <name>ATP</name>
        <dbReference type="ChEBI" id="CHEBI:30616"/>
    </ligand>
</feature>
<evidence type="ECO:0000250" key="1">
    <source>
        <dbReference type="UniProtKB" id="P16712"/>
    </source>
</evidence>
<evidence type="ECO:0000255" key="2">
    <source>
        <dbReference type="PROSITE-ProRule" id="PRU00541"/>
    </source>
</evidence>
<evidence type="ECO:0000255" key="3">
    <source>
        <dbReference type="PROSITE-ProRule" id="PRU00542"/>
    </source>
</evidence>
<evidence type="ECO:0000305" key="4"/>
<accession>P20534</accession>
<dbReference type="EC" id="3.6.4.-"/>
<dbReference type="EMBL" id="M35027">
    <property type="protein sequence ID" value="AAA48140.1"/>
    <property type="molecule type" value="Genomic_DNA"/>
</dbReference>
<dbReference type="PIR" id="B42519">
    <property type="entry name" value="B42519"/>
</dbReference>
<dbReference type="SMR" id="P20534"/>
<dbReference type="Proteomes" id="UP000008269">
    <property type="component" value="Segment"/>
</dbReference>
<dbReference type="GO" id="GO:0044423">
    <property type="term" value="C:virion component"/>
    <property type="evidence" value="ECO:0007669"/>
    <property type="project" value="UniProtKB-KW"/>
</dbReference>
<dbReference type="GO" id="GO:0005524">
    <property type="term" value="F:ATP binding"/>
    <property type="evidence" value="ECO:0007669"/>
    <property type="project" value="UniProtKB-KW"/>
</dbReference>
<dbReference type="GO" id="GO:0003677">
    <property type="term" value="F:DNA binding"/>
    <property type="evidence" value="ECO:0007669"/>
    <property type="project" value="UniProtKB-KW"/>
</dbReference>
<dbReference type="GO" id="GO:0004386">
    <property type="term" value="F:helicase activity"/>
    <property type="evidence" value="ECO:0007669"/>
    <property type="project" value="UniProtKB-KW"/>
</dbReference>
<dbReference type="GO" id="GO:0016787">
    <property type="term" value="F:hydrolase activity"/>
    <property type="evidence" value="ECO:0007669"/>
    <property type="project" value="UniProtKB-KW"/>
</dbReference>
<dbReference type="GO" id="GO:0006353">
    <property type="term" value="P:DNA-templated transcription termination"/>
    <property type="evidence" value="ECO:0007669"/>
    <property type="project" value="UniProtKB-KW"/>
</dbReference>
<dbReference type="CDD" id="cd18785">
    <property type="entry name" value="SF2_C"/>
    <property type="match status" value="1"/>
</dbReference>
<dbReference type="Gene3D" id="3.40.50.300">
    <property type="entry name" value="P-loop containing nucleotide triphosphate hydrolases"/>
    <property type="match status" value="2"/>
</dbReference>
<dbReference type="InterPro" id="IPR006935">
    <property type="entry name" value="Helicase/UvrB_N"/>
</dbReference>
<dbReference type="InterPro" id="IPR014001">
    <property type="entry name" value="Helicase_ATP-bd"/>
</dbReference>
<dbReference type="InterPro" id="IPR050742">
    <property type="entry name" value="Helicase_Restrict-Modif_Enz"/>
</dbReference>
<dbReference type="InterPro" id="IPR027417">
    <property type="entry name" value="P-loop_NTPase"/>
</dbReference>
<dbReference type="PANTHER" id="PTHR47396:SF1">
    <property type="entry name" value="ATP-DEPENDENT HELICASE IRC3-RELATED"/>
    <property type="match status" value="1"/>
</dbReference>
<dbReference type="PANTHER" id="PTHR47396">
    <property type="entry name" value="TYPE I RESTRICTION ENZYME ECOKI R PROTEIN"/>
    <property type="match status" value="1"/>
</dbReference>
<dbReference type="Pfam" id="PF04851">
    <property type="entry name" value="ResIII"/>
    <property type="match status" value="1"/>
</dbReference>
<dbReference type="SMART" id="SM00487">
    <property type="entry name" value="DEXDc"/>
    <property type="match status" value="1"/>
</dbReference>
<dbReference type="SUPFAM" id="SSF52540">
    <property type="entry name" value="P-loop containing nucleoside triphosphate hydrolases"/>
    <property type="match status" value="1"/>
</dbReference>
<dbReference type="PROSITE" id="PS51192">
    <property type="entry name" value="HELICASE_ATP_BIND_1"/>
    <property type="match status" value="1"/>
</dbReference>
<dbReference type="PROSITE" id="PS51194">
    <property type="entry name" value="HELICASE_CTER"/>
    <property type="match status" value="1"/>
</dbReference>
<organism>
    <name type="scientific">Vaccinia virus (strain Copenhagen)</name>
    <name type="common">VACV</name>
    <dbReference type="NCBI Taxonomy" id="10249"/>
    <lineage>
        <taxon>Viruses</taxon>
        <taxon>Varidnaviria</taxon>
        <taxon>Bamfordvirae</taxon>
        <taxon>Nucleocytoviricota</taxon>
        <taxon>Pokkesviricetes</taxon>
        <taxon>Chitovirales</taxon>
        <taxon>Poxviridae</taxon>
        <taxon>Chordopoxvirinae</taxon>
        <taxon>Orthopoxvirus</taxon>
        <taxon>Vaccinia virus</taxon>
    </lineage>
</organism>
<comment type="function">
    <text evidence="1">DNA helicase which seems to act as a postreplicative transcription termination factor. Involved in ATP-dependent release of nascent RNA. Forms a stable complex with single-stranded DNA, and to a lesser extent RNA.</text>
</comment>
<comment type="subunit">
    <text evidence="1">Interacts with OPG087. Might be part of a transcription complex composed at least of OPG087, OPG110, and OPG145.</text>
</comment>
<comment type="subcellular location">
    <subcellularLocation>
        <location evidence="1">Virion</location>
    </subcellularLocation>
    <text evidence="1">Localizes to the virion core.</text>
</comment>
<comment type="similarity">
    <text evidence="4">Belongs to the helicase family. Poxviruses subfamily.</text>
</comment>
<gene>
    <name type="primary">OPG145</name>
    <name type="ORF">A18R</name>
</gene>
<proteinExistence type="inferred from homology"/>
<sequence length="493" mass="56737">MSLLKMEYNLYAELKKMTCGQPLSLFNEDGDFVEVEPGSSFKFLIPKGFYASPSVKTSLVFETLTTTDNKITSINPTNAPKLYPLQRKVVSEVVSNMRKMIESKRPLYITLHLACGFGKTITTCYLMATHGRKTVICVPNKMLIHQWKTQVEAVGLEHKISIDGVSSLLKELKTQSPDVLIVVSRHLTNDAFCKYINKHYDLFILDESHTYNLMNNTAVTRFLAYYPPMMCYFLTATPRPANRIYCNSIINIAKLSDLKKTIYAVDSFFEPYSTDNIRHMIKRLDGPSNKYHIYTEKLLSVDEPRNQLILDTLVEEFKSGTINRILVITKLREHMVFFYKRLLDLFGPEVVFIGDAQNRRTPDMVKSIKELNRFIFVSTLFYSGTGLDIPSLDSLFICSAVINNMQIEQLLGRVCRETELLDRTVYVFPSTSIKEIKYMIGNFMQRIISLSVDKLGFKQKSYRKHQESDPTSVCTTSSREERVLNRIFNSQNR</sequence>
<keyword id="KW-0067">ATP-binding</keyword>
<keyword id="KW-0238">DNA-binding</keyword>
<keyword id="KW-0347">Helicase</keyword>
<keyword id="KW-0378">Hydrolase</keyword>
<keyword id="KW-0426">Late protein</keyword>
<keyword id="KW-0547">Nucleotide-binding</keyword>
<keyword id="KW-0597">Phosphoprotein</keyword>
<keyword id="KW-1185">Reference proteome</keyword>
<keyword id="KW-0804">Transcription</keyword>
<keyword id="KW-0805">Transcription regulation</keyword>
<keyword id="KW-0806">Transcription termination</keyword>
<keyword id="KW-0946">Virion</keyword>